<evidence type="ECO:0000255" key="1">
    <source>
        <dbReference type="HAMAP-Rule" id="MF_01871"/>
    </source>
</evidence>
<evidence type="ECO:0000305" key="2"/>
<gene>
    <name evidence="1" type="primary">dabA</name>
    <name type="ordered locus">XOO2196</name>
</gene>
<comment type="function">
    <text evidence="1">Part of an energy-coupled inorganic carbon pump.</text>
</comment>
<comment type="cofactor">
    <cofactor evidence="1">
        <name>Zn(2+)</name>
        <dbReference type="ChEBI" id="CHEBI:29105"/>
    </cofactor>
</comment>
<comment type="subunit">
    <text evidence="1">Forms a complex with DabB.</text>
</comment>
<comment type="subcellular location">
    <subcellularLocation>
        <location evidence="1">Cell inner membrane</location>
        <topology evidence="1">Peripheral membrane protein</topology>
    </subcellularLocation>
</comment>
<comment type="similarity">
    <text evidence="1">Belongs to the inorganic carbon transporter (TC 9.A.2) DabA family.</text>
</comment>
<comment type="sequence caution" evidence="2">
    <conflict type="erroneous initiation">
        <sequence resource="EMBL-CDS" id="AAW75450"/>
    </conflict>
    <text>Extended N-terminus.</text>
</comment>
<keyword id="KW-0997">Cell inner membrane</keyword>
<keyword id="KW-1003">Cell membrane</keyword>
<keyword id="KW-0472">Membrane</keyword>
<keyword id="KW-0479">Metal-binding</keyword>
<keyword id="KW-1185">Reference proteome</keyword>
<keyword id="KW-0813">Transport</keyword>
<keyword id="KW-0862">Zinc</keyword>
<sequence length="812" mass="86861">MLMTTTTIAMSLSHDVIIAAAQRAARAIPPLWPLASSVAVNPFLGQASEPLEVAAARLRRASGIAVTMPRSWYAERLQSGEITEDDLQAAFQTAPAARRPPNVSALKHAIKVARPAPQAIPTVAELARDVTAIDWPGIVNERIGHWAAGYFDQGQALWAVGQSGGAYSTWRIIATHDLTPEIAGLAGFSQSVSDAPATAEDALVDCVARLGLSPDALDGYFHRLLTTLGGWGQVARYRLWQAELNGGTDACVTDLLAIRMLWEAALLHNGGSALVPGWQSAIAAYAAPVAASSDDVVDSILQEAAERAAQRKLNTVLAAPSSARLSRGRLTLQMAFCIDVRSEVFRRALESLDSGITTLGFAGFFGFGIGHRRFASDVVEARLPVLLSPGVVTCAGEPTPAANAAELSARITARAKRAWGRFKLAAISSFAFVEATGPIYIAKLLRDGLALARHHAPTDPAPRPAHELDLDTRLTMAARILKAMSFTSNFARLVVLAGHGAKVVNNPHASALHCGACGGYSGEVNAQLLASLLNDHQVRAGLAERGIVIPADTLFLAALHDTTTDAVTLFADDHPSPTHAQDLAQVTQWLAAAGALARGERALRLPRANRSQDIAHRARDWAEIRPEWALAGCQAFIAAPRSRSAGRDLAGRAFLHDYDWRCDHGFGVLELILTAPVVVASWISLQYYGSTVAPERFGAGNKLLHNVTGGIGVVEGNGGILRTGLPWQSVHDGERLIHEPLRLSVLIEAPTEAIGAILERHPQLRALFDNRWLHLFALDDEGRMARRYIGDLSWETYVGDASSQSNRASTLA</sequence>
<protein>
    <recommendedName>
        <fullName evidence="1">Probable inorganic carbon transporter subunit DabA</fullName>
    </recommendedName>
</protein>
<feature type="chain" id="PRO_0000387327" description="Probable inorganic carbon transporter subunit DabA">
    <location>
        <begin position="1"/>
        <end position="812"/>
    </location>
</feature>
<feature type="binding site" evidence="1">
    <location>
        <position position="337"/>
    </location>
    <ligand>
        <name>Zn(2+)</name>
        <dbReference type="ChEBI" id="CHEBI:29105"/>
    </ligand>
</feature>
<feature type="binding site" evidence="1">
    <location>
        <position position="339"/>
    </location>
    <ligand>
        <name>Zn(2+)</name>
        <dbReference type="ChEBI" id="CHEBI:29105"/>
    </ligand>
</feature>
<feature type="binding site" evidence="1">
    <location>
        <position position="499"/>
    </location>
    <ligand>
        <name>Zn(2+)</name>
        <dbReference type="ChEBI" id="CHEBI:29105"/>
    </ligand>
</feature>
<feature type="binding site" evidence="1">
    <location>
        <position position="514"/>
    </location>
    <ligand>
        <name>Zn(2+)</name>
        <dbReference type="ChEBI" id="CHEBI:29105"/>
    </ligand>
</feature>
<organism>
    <name type="scientific">Xanthomonas oryzae pv. oryzae (strain KACC10331 / KXO85)</name>
    <dbReference type="NCBI Taxonomy" id="291331"/>
    <lineage>
        <taxon>Bacteria</taxon>
        <taxon>Pseudomonadati</taxon>
        <taxon>Pseudomonadota</taxon>
        <taxon>Gammaproteobacteria</taxon>
        <taxon>Lysobacterales</taxon>
        <taxon>Lysobacteraceae</taxon>
        <taxon>Xanthomonas</taxon>
    </lineage>
</organism>
<accession>Q5H0S1</accession>
<proteinExistence type="inferred from homology"/>
<reference key="1">
    <citation type="journal article" date="2005" name="Nucleic Acids Res.">
        <title>The genome sequence of Xanthomonas oryzae pathovar oryzae KACC10331, the bacterial blight pathogen of rice.</title>
        <authorList>
            <person name="Lee B.-M."/>
            <person name="Park Y.-J."/>
            <person name="Park D.-S."/>
            <person name="Kang H.-W."/>
            <person name="Kim J.-G."/>
            <person name="Song E.-S."/>
            <person name="Park I.-C."/>
            <person name="Yoon U.-H."/>
            <person name="Hahn J.-H."/>
            <person name="Koo B.-S."/>
            <person name="Lee G.-B."/>
            <person name="Kim H."/>
            <person name="Park H.-S."/>
            <person name="Yoon K.-O."/>
            <person name="Kim J.-H."/>
            <person name="Jung C.-H."/>
            <person name="Koh N.-H."/>
            <person name="Seo J.-S."/>
            <person name="Go S.-J."/>
        </authorList>
    </citation>
    <scope>NUCLEOTIDE SEQUENCE [LARGE SCALE GENOMIC DNA]</scope>
    <source>
        <strain>KACC10331 / KXO85</strain>
    </source>
</reference>
<dbReference type="EMBL" id="AE013598">
    <property type="protein sequence ID" value="AAW75450.1"/>
    <property type="status" value="ALT_INIT"/>
    <property type="molecule type" value="Genomic_DNA"/>
</dbReference>
<dbReference type="STRING" id="291331.XOO2196"/>
<dbReference type="KEGG" id="xoo:XOO2196"/>
<dbReference type="HOGENOM" id="CLU_009885_1_0_6"/>
<dbReference type="Proteomes" id="UP000006735">
    <property type="component" value="Chromosome"/>
</dbReference>
<dbReference type="GO" id="GO:0005886">
    <property type="term" value="C:plasma membrane"/>
    <property type="evidence" value="ECO:0007669"/>
    <property type="project" value="UniProtKB-SubCell"/>
</dbReference>
<dbReference type="GO" id="GO:0008270">
    <property type="term" value="F:zinc ion binding"/>
    <property type="evidence" value="ECO:0007669"/>
    <property type="project" value="UniProtKB-UniRule"/>
</dbReference>
<dbReference type="HAMAP" id="MF_01871">
    <property type="entry name" value="DabA"/>
    <property type="match status" value="1"/>
</dbReference>
<dbReference type="InterPro" id="IPR018752">
    <property type="entry name" value="DabA"/>
</dbReference>
<dbReference type="PANTHER" id="PTHR38344:SF1">
    <property type="entry name" value="INORGANIC CARBON TRANSPORTER SUBUNIT DABA-RELATED"/>
    <property type="match status" value="1"/>
</dbReference>
<dbReference type="PANTHER" id="PTHR38344">
    <property type="entry name" value="UPF0753 PROTEIN AQ_863"/>
    <property type="match status" value="1"/>
</dbReference>
<dbReference type="Pfam" id="PF10070">
    <property type="entry name" value="DabA"/>
    <property type="match status" value="1"/>
</dbReference>
<name>DABA_XANOR</name>